<feature type="chain" id="PRO_1000017817" description="Methylglyoxal synthase">
    <location>
        <begin position="1"/>
        <end position="147"/>
    </location>
</feature>
<feature type="domain" description="MGS-like" evidence="1">
    <location>
        <begin position="4"/>
        <end position="147"/>
    </location>
</feature>
<feature type="active site" description="Proton donor/acceptor" evidence="1">
    <location>
        <position position="69"/>
    </location>
</feature>
<feature type="binding site" evidence="1">
    <location>
        <position position="17"/>
    </location>
    <ligand>
        <name>substrate</name>
    </ligand>
</feature>
<feature type="binding site" evidence="1">
    <location>
        <position position="21"/>
    </location>
    <ligand>
        <name>substrate</name>
    </ligand>
</feature>
<feature type="binding site" evidence="1">
    <location>
        <begin position="43"/>
        <end position="46"/>
    </location>
    <ligand>
        <name>substrate</name>
    </ligand>
</feature>
<feature type="binding site" evidence="1">
    <location>
        <begin position="63"/>
        <end position="64"/>
    </location>
    <ligand>
        <name>substrate</name>
    </ligand>
</feature>
<feature type="binding site" evidence="1">
    <location>
        <position position="96"/>
    </location>
    <ligand>
        <name>substrate</name>
    </ligand>
</feature>
<keyword id="KW-0456">Lyase</keyword>
<proteinExistence type="inferred from homology"/>
<sequence>MKEVSVPATKRIALVAHDNRKEDLVSWVKAHREILSKHRLFGTGTTGKLISEETGLPVTRFLSGPLGGDQQIGAKIAEGDLDIVVFFWDPLTAQPHDPDVKALLRIAVLYNVPMACNRSTADYMISSPQFTISYEKVLLNFELLCES</sequence>
<protein>
    <recommendedName>
        <fullName evidence="1">Methylglyoxal synthase</fullName>
        <shortName evidence="1">MGS</shortName>
        <ecNumber evidence="1">4.2.3.3</ecNumber>
    </recommendedName>
</protein>
<gene>
    <name evidence="1" type="primary">mgsA</name>
    <name type="ordered locus">LBL_0886</name>
</gene>
<comment type="function">
    <text evidence="1">Catalyzes the formation of methylglyoxal from dihydroxyacetone phosphate.</text>
</comment>
<comment type="catalytic activity">
    <reaction evidence="1">
        <text>dihydroxyacetone phosphate = methylglyoxal + phosphate</text>
        <dbReference type="Rhea" id="RHEA:17937"/>
        <dbReference type="ChEBI" id="CHEBI:17158"/>
        <dbReference type="ChEBI" id="CHEBI:43474"/>
        <dbReference type="ChEBI" id="CHEBI:57642"/>
        <dbReference type="EC" id="4.2.3.3"/>
    </reaction>
</comment>
<comment type="similarity">
    <text evidence="1">Belongs to the methylglyoxal synthase family.</text>
</comment>
<evidence type="ECO:0000255" key="1">
    <source>
        <dbReference type="HAMAP-Rule" id="MF_00549"/>
    </source>
</evidence>
<reference key="1">
    <citation type="journal article" date="2006" name="Proc. Natl. Acad. Sci. U.S.A.">
        <title>Genome reduction in Leptospira borgpetersenii reflects limited transmission potential.</title>
        <authorList>
            <person name="Bulach D.M."/>
            <person name="Zuerner R.L."/>
            <person name="Wilson P."/>
            <person name="Seemann T."/>
            <person name="McGrath A."/>
            <person name="Cullen P.A."/>
            <person name="Davis J."/>
            <person name="Johnson M."/>
            <person name="Kuczek E."/>
            <person name="Alt D.P."/>
            <person name="Peterson-Burch B."/>
            <person name="Coppel R.L."/>
            <person name="Rood J.I."/>
            <person name="Davies J.K."/>
            <person name="Adler B."/>
        </authorList>
    </citation>
    <scope>NUCLEOTIDE SEQUENCE [LARGE SCALE GENOMIC DNA]</scope>
    <source>
        <strain>L550</strain>
    </source>
</reference>
<dbReference type="EC" id="4.2.3.3" evidence="1"/>
<dbReference type="EMBL" id="CP000348">
    <property type="protein sequence ID" value="ABJ78434.1"/>
    <property type="molecule type" value="Genomic_DNA"/>
</dbReference>
<dbReference type="RefSeq" id="WP_002721507.1">
    <property type="nucleotide sequence ID" value="NC_008508.1"/>
</dbReference>
<dbReference type="SMR" id="Q053R1"/>
<dbReference type="KEGG" id="lbl:LBL_0886"/>
<dbReference type="HOGENOM" id="CLU_120420_0_1_12"/>
<dbReference type="GO" id="GO:0005829">
    <property type="term" value="C:cytosol"/>
    <property type="evidence" value="ECO:0007669"/>
    <property type="project" value="TreeGrafter"/>
</dbReference>
<dbReference type="GO" id="GO:0008929">
    <property type="term" value="F:methylglyoxal synthase activity"/>
    <property type="evidence" value="ECO:0007669"/>
    <property type="project" value="UniProtKB-UniRule"/>
</dbReference>
<dbReference type="GO" id="GO:0019242">
    <property type="term" value="P:methylglyoxal biosynthetic process"/>
    <property type="evidence" value="ECO:0007669"/>
    <property type="project" value="UniProtKB-UniRule"/>
</dbReference>
<dbReference type="CDD" id="cd01422">
    <property type="entry name" value="MGS"/>
    <property type="match status" value="1"/>
</dbReference>
<dbReference type="FunFam" id="3.40.50.1380:FF:000006">
    <property type="entry name" value="Methylglyoxal synthase"/>
    <property type="match status" value="1"/>
</dbReference>
<dbReference type="Gene3D" id="3.40.50.1380">
    <property type="entry name" value="Methylglyoxal synthase-like domain"/>
    <property type="match status" value="1"/>
</dbReference>
<dbReference type="HAMAP" id="MF_00549">
    <property type="entry name" value="Methylglyoxal_synth"/>
    <property type="match status" value="1"/>
</dbReference>
<dbReference type="InterPro" id="IPR004363">
    <property type="entry name" value="Methylgl_synth"/>
</dbReference>
<dbReference type="InterPro" id="IPR018148">
    <property type="entry name" value="Methylglyoxal_synth_AS"/>
</dbReference>
<dbReference type="InterPro" id="IPR011607">
    <property type="entry name" value="MGS-like_dom"/>
</dbReference>
<dbReference type="InterPro" id="IPR036914">
    <property type="entry name" value="MGS-like_dom_sf"/>
</dbReference>
<dbReference type="NCBIfam" id="TIGR00160">
    <property type="entry name" value="MGSA"/>
    <property type="match status" value="1"/>
</dbReference>
<dbReference type="NCBIfam" id="NF003559">
    <property type="entry name" value="PRK05234.1"/>
    <property type="match status" value="1"/>
</dbReference>
<dbReference type="PANTHER" id="PTHR30492">
    <property type="entry name" value="METHYLGLYOXAL SYNTHASE"/>
    <property type="match status" value="1"/>
</dbReference>
<dbReference type="PANTHER" id="PTHR30492:SF0">
    <property type="entry name" value="METHYLGLYOXAL SYNTHASE"/>
    <property type="match status" value="1"/>
</dbReference>
<dbReference type="Pfam" id="PF02142">
    <property type="entry name" value="MGS"/>
    <property type="match status" value="1"/>
</dbReference>
<dbReference type="PIRSF" id="PIRSF006614">
    <property type="entry name" value="Methylglyox_syn"/>
    <property type="match status" value="1"/>
</dbReference>
<dbReference type="SMART" id="SM00851">
    <property type="entry name" value="MGS"/>
    <property type="match status" value="1"/>
</dbReference>
<dbReference type="SUPFAM" id="SSF52335">
    <property type="entry name" value="Methylglyoxal synthase-like"/>
    <property type="match status" value="1"/>
</dbReference>
<dbReference type="PROSITE" id="PS01335">
    <property type="entry name" value="METHYLGLYOXAL_SYNTH"/>
    <property type="match status" value="1"/>
</dbReference>
<dbReference type="PROSITE" id="PS51855">
    <property type="entry name" value="MGS"/>
    <property type="match status" value="1"/>
</dbReference>
<organism>
    <name type="scientific">Leptospira borgpetersenii serovar Hardjo-bovis (strain L550)</name>
    <dbReference type="NCBI Taxonomy" id="355276"/>
    <lineage>
        <taxon>Bacteria</taxon>
        <taxon>Pseudomonadati</taxon>
        <taxon>Spirochaetota</taxon>
        <taxon>Spirochaetia</taxon>
        <taxon>Leptospirales</taxon>
        <taxon>Leptospiraceae</taxon>
        <taxon>Leptospira</taxon>
    </lineage>
</organism>
<accession>Q053R1</accession>
<name>MGSA_LEPBL</name>